<dbReference type="EC" id="3.6.5.-"/>
<dbReference type="EMBL" id="AL844508">
    <property type="protein sequence ID" value="CAD51800.1"/>
    <property type="molecule type" value="Genomic_DNA"/>
</dbReference>
<dbReference type="RefSeq" id="XP_001351989.1">
    <property type="nucleotide sequence ID" value="XM_001351953.1"/>
</dbReference>
<dbReference type="SMR" id="Q8I335"/>
<dbReference type="BioGRID" id="1208671">
    <property type="interactions" value="1"/>
</dbReference>
<dbReference type="FunCoup" id="Q8I335">
    <property type="interactions" value="267"/>
</dbReference>
<dbReference type="IntAct" id="Q8I335">
    <property type="interactions" value="1"/>
</dbReference>
<dbReference type="STRING" id="36329.Q8I335"/>
<dbReference type="PaxDb" id="5833-PFI0570w"/>
<dbReference type="EnsemblProtists" id="CAD51800">
    <property type="protein sequence ID" value="CAD51800"/>
    <property type="gene ID" value="PF3D7_0911700"/>
</dbReference>
<dbReference type="KEGG" id="pfa:PF3D7_0911700"/>
<dbReference type="VEuPathDB" id="PlasmoDB:PF3D7_0911700"/>
<dbReference type="HOGENOM" id="CLU_009995_0_0_1"/>
<dbReference type="InParanoid" id="Q8I335"/>
<dbReference type="OMA" id="QVKCDEN"/>
<dbReference type="OrthoDB" id="1074at2759"/>
<dbReference type="PhylomeDB" id="Q8I335"/>
<dbReference type="Proteomes" id="UP000001450">
    <property type="component" value="Chromosome 9"/>
</dbReference>
<dbReference type="GO" id="GO:0005743">
    <property type="term" value="C:mitochondrial inner membrane"/>
    <property type="evidence" value="ECO:0007669"/>
    <property type="project" value="UniProtKB-SubCell"/>
</dbReference>
<dbReference type="GO" id="GO:0005525">
    <property type="term" value="F:GTP binding"/>
    <property type="evidence" value="ECO:0007669"/>
    <property type="project" value="UniProtKB-KW"/>
</dbReference>
<dbReference type="GO" id="GO:0003924">
    <property type="term" value="F:GTPase activity"/>
    <property type="evidence" value="ECO:0007669"/>
    <property type="project" value="InterPro"/>
</dbReference>
<dbReference type="GO" id="GO:0043022">
    <property type="term" value="F:ribosome binding"/>
    <property type="evidence" value="ECO:0000318"/>
    <property type="project" value="GO_Central"/>
</dbReference>
<dbReference type="GO" id="GO:0045727">
    <property type="term" value="P:positive regulation of translation"/>
    <property type="evidence" value="ECO:0000318"/>
    <property type="project" value="GO_Central"/>
</dbReference>
<dbReference type="GO" id="GO:0006412">
    <property type="term" value="P:translation"/>
    <property type="evidence" value="ECO:0007669"/>
    <property type="project" value="UniProtKB-KW"/>
</dbReference>
<dbReference type="CDD" id="cd16260">
    <property type="entry name" value="EF4_III"/>
    <property type="match status" value="1"/>
</dbReference>
<dbReference type="CDD" id="cd03709">
    <property type="entry name" value="lepA_C"/>
    <property type="match status" value="1"/>
</dbReference>
<dbReference type="Gene3D" id="3.30.70.240">
    <property type="match status" value="1"/>
</dbReference>
<dbReference type="Gene3D" id="3.30.70.2570">
    <property type="entry name" value="Elongation factor 4, C-terminal domain"/>
    <property type="match status" value="1"/>
</dbReference>
<dbReference type="Gene3D" id="3.30.70.870">
    <property type="entry name" value="Elongation Factor G (Translational Gtpase), domain 3"/>
    <property type="match status" value="1"/>
</dbReference>
<dbReference type="Gene3D" id="3.40.50.300">
    <property type="entry name" value="P-loop containing nucleotide triphosphate hydrolases"/>
    <property type="match status" value="1"/>
</dbReference>
<dbReference type="Gene3D" id="2.40.30.10">
    <property type="entry name" value="Translation factors"/>
    <property type="match status" value="1"/>
</dbReference>
<dbReference type="InterPro" id="IPR006297">
    <property type="entry name" value="EF-4"/>
</dbReference>
<dbReference type="InterPro" id="IPR035647">
    <property type="entry name" value="EFG_III/V"/>
</dbReference>
<dbReference type="InterPro" id="IPR000640">
    <property type="entry name" value="EFG_V-like"/>
</dbReference>
<dbReference type="InterPro" id="IPR038363">
    <property type="entry name" value="LepA_C_sf"/>
</dbReference>
<dbReference type="InterPro" id="IPR013842">
    <property type="entry name" value="LepA_CTD"/>
</dbReference>
<dbReference type="InterPro" id="IPR035654">
    <property type="entry name" value="LepA_IV"/>
</dbReference>
<dbReference type="InterPro" id="IPR027417">
    <property type="entry name" value="P-loop_NTPase"/>
</dbReference>
<dbReference type="InterPro" id="IPR005225">
    <property type="entry name" value="Small_GTP-bd"/>
</dbReference>
<dbReference type="InterPro" id="IPR000795">
    <property type="entry name" value="T_Tr_GTP-bd_dom"/>
</dbReference>
<dbReference type="InterPro" id="IPR009000">
    <property type="entry name" value="Transl_B-barrel_sf"/>
</dbReference>
<dbReference type="NCBIfam" id="TIGR00231">
    <property type="entry name" value="small_GTP"/>
    <property type="match status" value="1"/>
</dbReference>
<dbReference type="PANTHER" id="PTHR43512:SF4">
    <property type="entry name" value="TRANSLATION FACTOR GUF1 HOMOLOG, CHLOROPLASTIC"/>
    <property type="match status" value="1"/>
</dbReference>
<dbReference type="PANTHER" id="PTHR43512">
    <property type="entry name" value="TRANSLATION FACTOR GUF1-RELATED"/>
    <property type="match status" value="1"/>
</dbReference>
<dbReference type="Pfam" id="PF00679">
    <property type="entry name" value="EFG_C"/>
    <property type="match status" value="1"/>
</dbReference>
<dbReference type="Pfam" id="PF00009">
    <property type="entry name" value="GTP_EFTU"/>
    <property type="match status" value="1"/>
</dbReference>
<dbReference type="Pfam" id="PF06421">
    <property type="entry name" value="LepA_C"/>
    <property type="match status" value="1"/>
</dbReference>
<dbReference type="PRINTS" id="PR00315">
    <property type="entry name" value="ELONGATNFCT"/>
</dbReference>
<dbReference type="SUPFAM" id="SSF54980">
    <property type="entry name" value="EF-G C-terminal domain-like"/>
    <property type="match status" value="2"/>
</dbReference>
<dbReference type="SUPFAM" id="SSF52540">
    <property type="entry name" value="P-loop containing nucleoside triphosphate hydrolases"/>
    <property type="match status" value="1"/>
</dbReference>
<dbReference type="SUPFAM" id="SSF50447">
    <property type="entry name" value="Translation proteins"/>
    <property type="match status" value="1"/>
</dbReference>
<dbReference type="PROSITE" id="PS51722">
    <property type="entry name" value="G_TR_2"/>
    <property type="match status" value="1"/>
</dbReference>
<organism>
    <name type="scientific">Plasmodium falciparum (isolate 3D7)</name>
    <dbReference type="NCBI Taxonomy" id="36329"/>
    <lineage>
        <taxon>Eukaryota</taxon>
        <taxon>Sar</taxon>
        <taxon>Alveolata</taxon>
        <taxon>Apicomplexa</taxon>
        <taxon>Aconoidasida</taxon>
        <taxon>Haemosporida</taxon>
        <taxon>Plasmodiidae</taxon>
        <taxon>Plasmodium</taxon>
        <taxon>Plasmodium (Laverania)</taxon>
    </lineage>
</organism>
<protein>
    <recommendedName>
        <fullName>Translation factor GUF1 homolog, mitochondrial</fullName>
        <ecNumber>3.6.5.-</ecNumber>
    </recommendedName>
    <alternativeName>
        <fullName>Elongation factor 4 homolog</fullName>
        <shortName>EF-4</shortName>
    </alternativeName>
    <alternativeName>
        <fullName>GTPase GUF1 homolog</fullName>
    </alternativeName>
    <alternativeName>
        <fullName>Ribosomal back-translocase</fullName>
    </alternativeName>
</protein>
<keyword id="KW-0342">GTP-binding</keyword>
<keyword id="KW-0378">Hydrolase</keyword>
<keyword id="KW-0472">Membrane</keyword>
<keyword id="KW-0496">Mitochondrion</keyword>
<keyword id="KW-0999">Mitochondrion inner membrane</keyword>
<keyword id="KW-0547">Nucleotide-binding</keyword>
<keyword id="KW-0648">Protein biosynthesis</keyword>
<keyword id="KW-1185">Reference proteome</keyword>
<keyword id="KW-0809">Transit peptide</keyword>
<accession>Q8I335</accession>
<sequence>MNYTSVNKIRLWVLIVFLILYNIKCICENISDLKKRLCFNNFSNSKKKIKKKWLAKKKKNYLTIWKNKTYTTKRRNGYGKIEYKREENKKDDYNFMNTSLYLNYISNVKNFLFNKNNNKKNKIYYHKCKKSNIIEAKINDNDTLLSDEEFRNDVDRNDKEYYNIKKEYSENVCNQNRINDLSNCSVSSNNNILNECSSEVKKEMNYPLHNELYDNLNDNTIGHLKSEKCKEKYIRNFCILAHIDSGKSTLADRFLELTNTIKKKRMQEQFLDMMCLEREKGITIKLKAVRMHYNNYVFNLIDTPGHFDFYHEVKRSLNVCEGAILLIDGGKGIQSQTLNIFFELKKHDIKIIPVINKIDLSTCLYDKIKDDLINKFNFKENEILKISAKYGKNVKMLFQRIISDIPPPINTINSFFRGVVFDSFFDQYKGVVLIIKVLNGELRKKTEIFFINSAKSYIIQEVGYLVPEMKPTDVISQGDIAYVCSNIRNCDDIQISETIVNKDIIKKNNHNEFVINFKKINLGRDKNIMQRLSDEGKQYLTHHNKGEIKGDENGQVKCDENGQVKCDENGQVKCDENGQVKCDENGQVKCDENGQVKCDENGQVKCDENGQVKCDENGQVKCDENGQVKCDENGQVKCDENGQVKCDENGQVKCDKNKGEIKSFQYNEVKVDERYERNKEEIIYDHEHKKEGIFNIHKNDDLIKENIKEKENFSCSIQGNDNAIPILKKTDINIKSIAANKIEASYPSVYCNIYCVNDKKSNELEMSLNKLKLNDSSFSFKKYICETLGKGFKCGFNGLLHLNIIQERIKREYNIDTIVTAPSVNYLIRVKEKYMDKRLKEKLLEKNFDIQNMHIEQMDKTSSDDCFFFMTSNVNDIPTKNVVHSIYEPYVKTNIITPEIYQKYIMNECFKRRGIFIKKEIMNDQIIFLFEMPLSEILINFLDQIKSSTKGYGSMSYENIIIYKPSELYKIHIYINKKKIDSLSFLAHKRNYEDKSRKLVSKLKTLINPHQFLIIIQAALESKIFVSEKIKPLKKNVTAKCYGGDITRRRKLIEKQNEGKKKMFEIGKVKLPPNIFTKLFDIKSE</sequence>
<gene>
    <name type="ORF">PFI0570w</name>
</gene>
<comment type="function">
    <text evidence="1">Promotes mitochondrial protein synthesis. May act as a fidelity factor of the translation reaction, by catalyzing a one-codon backward translocation of tRNAs on improperly translocated ribosomes. Binds to mitochondrial ribosomes in a GTP-dependent manner (By similarity).</text>
</comment>
<comment type="catalytic activity">
    <reaction>
        <text>GTP + H2O = GDP + phosphate + H(+)</text>
        <dbReference type="Rhea" id="RHEA:19669"/>
        <dbReference type="ChEBI" id="CHEBI:15377"/>
        <dbReference type="ChEBI" id="CHEBI:15378"/>
        <dbReference type="ChEBI" id="CHEBI:37565"/>
        <dbReference type="ChEBI" id="CHEBI:43474"/>
        <dbReference type="ChEBI" id="CHEBI:58189"/>
    </reaction>
</comment>
<comment type="subcellular location">
    <subcellularLocation>
        <location evidence="1">Mitochondrion inner membrane</location>
        <topology evidence="1">Peripheral membrane protein</topology>
        <orientation evidence="1">Matrix side</orientation>
    </subcellularLocation>
</comment>
<comment type="similarity">
    <text evidence="3">Belongs to the TRAFAC class translation factor GTPase superfamily. Classic translation factor GTPase family. LepA subfamily.</text>
</comment>
<name>GUF1_PLAF7</name>
<feature type="transit peptide" description="Mitochondrion" evidence="2">
    <location>
        <begin position="1"/>
        <end status="unknown"/>
    </location>
</feature>
<feature type="chain" id="PRO_0000402852" description="Translation factor GUF1 homolog, mitochondrial">
    <location>
        <begin status="unknown"/>
        <end position="1085"/>
    </location>
</feature>
<feature type="domain" description="tr-type G" evidence="3">
    <location>
        <begin position="232"/>
        <end position="409"/>
    </location>
</feature>
<feature type="binding site" evidence="1">
    <location>
        <begin position="241"/>
        <end position="248"/>
    </location>
    <ligand>
        <name>GTP</name>
        <dbReference type="ChEBI" id="CHEBI:37565"/>
    </ligand>
</feature>
<feature type="binding site" evidence="1">
    <location>
        <begin position="302"/>
        <end position="306"/>
    </location>
    <ligand>
        <name>GTP</name>
        <dbReference type="ChEBI" id="CHEBI:37565"/>
    </ligand>
</feature>
<feature type="binding site" evidence="1">
    <location>
        <begin position="356"/>
        <end position="359"/>
    </location>
    <ligand>
        <name>GTP</name>
        <dbReference type="ChEBI" id="CHEBI:37565"/>
    </ligand>
</feature>
<proteinExistence type="inferred from homology"/>
<reference key="1">
    <citation type="journal article" date="2002" name="Nature">
        <title>Genome sequence of the human malaria parasite Plasmodium falciparum.</title>
        <authorList>
            <person name="Gardner M.J."/>
            <person name="Hall N."/>
            <person name="Fung E."/>
            <person name="White O."/>
            <person name="Berriman M."/>
            <person name="Hyman R.W."/>
            <person name="Carlton J.M."/>
            <person name="Pain A."/>
            <person name="Nelson K.E."/>
            <person name="Bowman S."/>
            <person name="Paulsen I.T."/>
            <person name="James K.D."/>
            <person name="Eisen J.A."/>
            <person name="Rutherford K.M."/>
            <person name="Salzberg S.L."/>
            <person name="Craig A."/>
            <person name="Kyes S."/>
            <person name="Chan M.-S."/>
            <person name="Nene V."/>
            <person name="Shallom S.J."/>
            <person name="Suh B."/>
            <person name="Peterson J."/>
            <person name="Angiuoli S."/>
            <person name="Pertea M."/>
            <person name="Allen J."/>
            <person name="Selengut J."/>
            <person name="Haft D."/>
            <person name="Mather M.W."/>
            <person name="Vaidya A.B."/>
            <person name="Martin D.M.A."/>
            <person name="Fairlamb A.H."/>
            <person name="Fraunholz M.J."/>
            <person name="Roos D.S."/>
            <person name="Ralph S.A."/>
            <person name="McFadden G.I."/>
            <person name="Cummings L.M."/>
            <person name="Subramanian G.M."/>
            <person name="Mungall C."/>
            <person name="Venter J.C."/>
            <person name="Carucci D.J."/>
            <person name="Hoffman S.L."/>
            <person name="Newbold C."/>
            <person name="Davis R.W."/>
            <person name="Fraser C.M."/>
            <person name="Barrell B.G."/>
        </authorList>
    </citation>
    <scope>NUCLEOTIDE SEQUENCE [LARGE SCALE GENOMIC DNA]</scope>
    <source>
        <strain>3D7</strain>
    </source>
</reference>
<reference key="2">
    <citation type="journal article" date="2002" name="Nature">
        <title>Sequence of Plasmodium falciparum chromosomes 1, 3-9 and 13.</title>
        <authorList>
            <person name="Hall N."/>
            <person name="Pain A."/>
            <person name="Berriman M."/>
            <person name="Churcher C.M."/>
            <person name="Harris B."/>
            <person name="Harris D."/>
            <person name="Mungall K.L."/>
            <person name="Bowman S."/>
            <person name="Atkin R."/>
            <person name="Baker S."/>
            <person name="Barron A."/>
            <person name="Brooks K."/>
            <person name="Buckee C.O."/>
            <person name="Burrows C."/>
            <person name="Cherevach I."/>
            <person name="Chillingworth C."/>
            <person name="Chillingworth T."/>
            <person name="Christodoulou Z."/>
            <person name="Clark L."/>
            <person name="Clark R."/>
            <person name="Corton C."/>
            <person name="Cronin A."/>
            <person name="Davies R.M."/>
            <person name="Davis P."/>
            <person name="Dear P."/>
            <person name="Dearden F."/>
            <person name="Doggett J."/>
            <person name="Feltwell T."/>
            <person name="Goble A."/>
            <person name="Goodhead I."/>
            <person name="Gwilliam R."/>
            <person name="Hamlin N."/>
            <person name="Hance Z."/>
            <person name="Harper D."/>
            <person name="Hauser H."/>
            <person name="Hornsby T."/>
            <person name="Holroyd S."/>
            <person name="Horrocks P."/>
            <person name="Humphray S."/>
            <person name="Jagels K."/>
            <person name="James K.D."/>
            <person name="Johnson D."/>
            <person name="Kerhornou A."/>
            <person name="Knights A."/>
            <person name="Konfortov B."/>
            <person name="Kyes S."/>
            <person name="Larke N."/>
            <person name="Lawson D."/>
            <person name="Lennard N."/>
            <person name="Line A."/>
            <person name="Maddison M."/>
            <person name="Mclean J."/>
            <person name="Mooney P."/>
            <person name="Moule S."/>
            <person name="Murphy L."/>
            <person name="Oliver K."/>
            <person name="Ormond D."/>
            <person name="Price C."/>
            <person name="Quail M.A."/>
            <person name="Rabbinowitsch E."/>
            <person name="Rajandream M.A."/>
            <person name="Rutter S."/>
            <person name="Rutherford K.M."/>
            <person name="Sanders M."/>
            <person name="Simmonds M."/>
            <person name="Seeger K."/>
            <person name="Sharp S."/>
            <person name="Smith R."/>
            <person name="Squares R."/>
            <person name="Squares S."/>
            <person name="Stevens K."/>
            <person name="Taylor K."/>
            <person name="Tivey A."/>
            <person name="Unwin L."/>
            <person name="Whitehead S."/>
            <person name="Woodward J.R."/>
            <person name="Sulston J.E."/>
            <person name="Craig A."/>
            <person name="Newbold C."/>
            <person name="Barrell B.G."/>
        </authorList>
    </citation>
    <scope>NUCLEOTIDE SEQUENCE [LARGE SCALE GENOMIC DNA]</scope>
    <source>
        <strain>3D7</strain>
    </source>
</reference>
<evidence type="ECO:0000250" key="1"/>
<evidence type="ECO:0000255" key="2"/>
<evidence type="ECO:0000255" key="3">
    <source>
        <dbReference type="PROSITE-ProRule" id="PRU01059"/>
    </source>
</evidence>